<gene>
    <name evidence="1" type="primary">gltX</name>
    <name type="ordered locus">Nther_0168</name>
</gene>
<keyword id="KW-0030">Aminoacyl-tRNA synthetase</keyword>
<keyword id="KW-0067">ATP-binding</keyword>
<keyword id="KW-0963">Cytoplasm</keyword>
<keyword id="KW-0436">Ligase</keyword>
<keyword id="KW-0479">Metal-binding</keyword>
<keyword id="KW-0547">Nucleotide-binding</keyword>
<keyword id="KW-0648">Protein biosynthesis</keyword>
<keyword id="KW-1185">Reference proteome</keyword>
<keyword id="KW-0862">Zinc</keyword>
<evidence type="ECO:0000255" key="1">
    <source>
        <dbReference type="HAMAP-Rule" id="MF_00022"/>
    </source>
</evidence>
<reference key="1">
    <citation type="submission" date="2008-04" db="EMBL/GenBank/DDBJ databases">
        <title>Complete sequence of chromosome of Natranaerobius thermophilus JW/NM-WN-LF.</title>
        <authorList>
            <consortium name="US DOE Joint Genome Institute"/>
            <person name="Copeland A."/>
            <person name="Lucas S."/>
            <person name="Lapidus A."/>
            <person name="Glavina del Rio T."/>
            <person name="Dalin E."/>
            <person name="Tice H."/>
            <person name="Bruce D."/>
            <person name="Goodwin L."/>
            <person name="Pitluck S."/>
            <person name="Chertkov O."/>
            <person name="Brettin T."/>
            <person name="Detter J.C."/>
            <person name="Han C."/>
            <person name="Kuske C.R."/>
            <person name="Schmutz J."/>
            <person name="Larimer F."/>
            <person name="Land M."/>
            <person name="Hauser L."/>
            <person name="Kyrpides N."/>
            <person name="Lykidis A."/>
            <person name="Mesbah N.M."/>
            <person name="Wiegel J."/>
        </authorList>
    </citation>
    <scope>NUCLEOTIDE SEQUENCE [LARGE SCALE GENOMIC DNA]</scope>
    <source>
        <strain>ATCC BAA-1301 / DSM 18059 / JW/NM-WN-LF</strain>
    </source>
</reference>
<feature type="chain" id="PRO_0000367717" description="Glutamate--tRNA ligase">
    <location>
        <begin position="1"/>
        <end position="488"/>
    </location>
</feature>
<feature type="short sequence motif" description="'HIGH' region" evidence="1">
    <location>
        <begin position="11"/>
        <end position="21"/>
    </location>
</feature>
<feature type="short sequence motif" description="'KMSKS' region" evidence="1">
    <location>
        <begin position="252"/>
        <end position="256"/>
    </location>
</feature>
<feature type="binding site" evidence="1">
    <location>
        <position position="108"/>
    </location>
    <ligand>
        <name>Zn(2+)</name>
        <dbReference type="ChEBI" id="CHEBI:29105"/>
    </ligand>
</feature>
<feature type="binding site" evidence="1">
    <location>
        <position position="110"/>
    </location>
    <ligand>
        <name>Zn(2+)</name>
        <dbReference type="ChEBI" id="CHEBI:29105"/>
    </ligand>
</feature>
<feature type="binding site" evidence="1">
    <location>
        <position position="135"/>
    </location>
    <ligand>
        <name>Zn(2+)</name>
        <dbReference type="ChEBI" id="CHEBI:29105"/>
    </ligand>
</feature>
<feature type="binding site" evidence="1">
    <location>
        <position position="137"/>
    </location>
    <ligand>
        <name>Zn(2+)</name>
        <dbReference type="ChEBI" id="CHEBI:29105"/>
    </ligand>
</feature>
<feature type="binding site" evidence="1">
    <location>
        <position position="255"/>
    </location>
    <ligand>
        <name>ATP</name>
        <dbReference type="ChEBI" id="CHEBI:30616"/>
    </ligand>
</feature>
<sequence length="488" mass="55984">MTNKARLRFAPSPTGQIHIGNIRTALFNWLYSRHIDGEFILRVEDTDMNRSVEEYEQIIFRALSWLGLDWDEGPQKGGDFGPYRQSERKDIYHKYANKLLEAGKAYYCYCTEEELEEMREAQRARGEMPRYSGKCADLSSEERAELENEGRKSVIRFKVPENQTIRVNDLVKGEVDFESDGIGDFILIKSDDMASYNFACVVDDYLMNITHVLRGEDHLSNTPKQVMIYEALGFETPEFGHLSLILGPDKAKLSKRHGDTFIGEYREKGYLPEAMVNFLALLGWSPPGEDELFTQDELIRLFDIGRVSKSAAVFDVDKLNWMNSHYIKEADTERLLNLSKEYLINSDLVSQEQLEHDWEWFVSAVDLVKEKIDMLSELPPQLKIFYGDDVDLKGEEVEFLEKDHVPELLSEVINQFNDLDSFEDPKAIKKAVNKAGKQVGVKGKQLFMPVRIAVSGQMHGPELDQLISLLGRERAINRVNSTLSQIQS</sequence>
<accession>B2A4B3</accession>
<organism>
    <name type="scientific">Natranaerobius thermophilus (strain ATCC BAA-1301 / DSM 18059 / JW/NM-WN-LF)</name>
    <dbReference type="NCBI Taxonomy" id="457570"/>
    <lineage>
        <taxon>Bacteria</taxon>
        <taxon>Bacillati</taxon>
        <taxon>Bacillota</taxon>
        <taxon>Clostridia</taxon>
        <taxon>Natranaerobiales</taxon>
        <taxon>Natranaerobiaceae</taxon>
        <taxon>Natranaerobius</taxon>
    </lineage>
</organism>
<comment type="function">
    <text evidence="1">Catalyzes the attachment of glutamate to tRNA(Glu) in a two-step reaction: glutamate is first activated by ATP to form Glu-AMP and then transferred to the acceptor end of tRNA(Glu).</text>
</comment>
<comment type="catalytic activity">
    <reaction evidence="1">
        <text>tRNA(Glu) + L-glutamate + ATP = L-glutamyl-tRNA(Glu) + AMP + diphosphate</text>
        <dbReference type="Rhea" id="RHEA:23540"/>
        <dbReference type="Rhea" id="RHEA-COMP:9663"/>
        <dbReference type="Rhea" id="RHEA-COMP:9680"/>
        <dbReference type="ChEBI" id="CHEBI:29985"/>
        <dbReference type="ChEBI" id="CHEBI:30616"/>
        <dbReference type="ChEBI" id="CHEBI:33019"/>
        <dbReference type="ChEBI" id="CHEBI:78442"/>
        <dbReference type="ChEBI" id="CHEBI:78520"/>
        <dbReference type="ChEBI" id="CHEBI:456215"/>
        <dbReference type="EC" id="6.1.1.17"/>
    </reaction>
</comment>
<comment type="cofactor">
    <cofactor evidence="1">
        <name>Zn(2+)</name>
        <dbReference type="ChEBI" id="CHEBI:29105"/>
    </cofactor>
    <text evidence="1">Binds 1 zinc ion per subunit.</text>
</comment>
<comment type="subunit">
    <text evidence="1">Monomer.</text>
</comment>
<comment type="subcellular location">
    <subcellularLocation>
        <location evidence="1">Cytoplasm</location>
    </subcellularLocation>
</comment>
<comment type="similarity">
    <text evidence="1">Belongs to the class-I aminoacyl-tRNA synthetase family. Glutamate--tRNA ligase type 1 subfamily.</text>
</comment>
<dbReference type="EC" id="6.1.1.17" evidence="1"/>
<dbReference type="EMBL" id="CP001034">
    <property type="protein sequence ID" value="ACB83767.1"/>
    <property type="molecule type" value="Genomic_DNA"/>
</dbReference>
<dbReference type="RefSeq" id="WP_012446658.1">
    <property type="nucleotide sequence ID" value="NC_010718.1"/>
</dbReference>
<dbReference type="SMR" id="B2A4B3"/>
<dbReference type="FunCoup" id="B2A4B3">
    <property type="interactions" value="444"/>
</dbReference>
<dbReference type="STRING" id="457570.Nther_0168"/>
<dbReference type="KEGG" id="nth:Nther_0168"/>
<dbReference type="eggNOG" id="COG0008">
    <property type="taxonomic scope" value="Bacteria"/>
</dbReference>
<dbReference type="HOGENOM" id="CLU_015768_6_3_9"/>
<dbReference type="InParanoid" id="B2A4B3"/>
<dbReference type="OrthoDB" id="9807503at2"/>
<dbReference type="Proteomes" id="UP000001683">
    <property type="component" value="Chromosome"/>
</dbReference>
<dbReference type="GO" id="GO:0005829">
    <property type="term" value="C:cytosol"/>
    <property type="evidence" value="ECO:0007669"/>
    <property type="project" value="TreeGrafter"/>
</dbReference>
<dbReference type="GO" id="GO:0005524">
    <property type="term" value="F:ATP binding"/>
    <property type="evidence" value="ECO:0007669"/>
    <property type="project" value="UniProtKB-UniRule"/>
</dbReference>
<dbReference type="GO" id="GO:0004818">
    <property type="term" value="F:glutamate-tRNA ligase activity"/>
    <property type="evidence" value="ECO:0007669"/>
    <property type="project" value="UniProtKB-UniRule"/>
</dbReference>
<dbReference type="GO" id="GO:0000049">
    <property type="term" value="F:tRNA binding"/>
    <property type="evidence" value="ECO:0007669"/>
    <property type="project" value="InterPro"/>
</dbReference>
<dbReference type="GO" id="GO:0008270">
    <property type="term" value="F:zinc ion binding"/>
    <property type="evidence" value="ECO:0007669"/>
    <property type="project" value="UniProtKB-UniRule"/>
</dbReference>
<dbReference type="GO" id="GO:0006424">
    <property type="term" value="P:glutamyl-tRNA aminoacylation"/>
    <property type="evidence" value="ECO:0007669"/>
    <property type="project" value="UniProtKB-UniRule"/>
</dbReference>
<dbReference type="CDD" id="cd00808">
    <property type="entry name" value="GluRS_core"/>
    <property type="match status" value="1"/>
</dbReference>
<dbReference type="FunFam" id="1.10.10.350:FF:000002">
    <property type="entry name" value="Glutamate--tRNA ligase"/>
    <property type="match status" value="1"/>
</dbReference>
<dbReference type="FunFam" id="3.40.50.620:FF:000007">
    <property type="entry name" value="Glutamate--tRNA ligase"/>
    <property type="match status" value="1"/>
</dbReference>
<dbReference type="Gene3D" id="1.10.10.350">
    <property type="match status" value="1"/>
</dbReference>
<dbReference type="Gene3D" id="3.40.50.620">
    <property type="entry name" value="HUPs"/>
    <property type="match status" value="1"/>
</dbReference>
<dbReference type="HAMAP" id="MF_00022">
    <property type="entry name" value="Glu_tRNA_synth_type1"/>
    <property type="match status" value="1"/>
</dbReference>
<dbReference type="InterPro" id="IPR045462">
    <property type="entry name" value="aa-tRNA-synth_I_cd-bd"/>
</dbReference>
<dbReference type="InterPro" id="IPR020751">
    <property type="entry name" value="aa-tRNA-synth_I_codon-bd_sub2"/>
</dbReference>
<dbReference type="InterPro" id="IPR001412">
    <property type="entry name" value="aa-tRNA-synth_I_CS"/>
</dbReference>
<dbReference type="InterPro" id="IPR008925">
    <property type="entry name" value="aa_tRNA-synth_I_cd-bd_sf"/>
</dbReference>
<dbReference type="InterPro" id="IPR004527">
    <property type="entry name" value="Glu-tRNA-ligase_bac/mito"/>
</dbReference>
<dbReference type="InterPro" id="IPR000924">
    <property type="entry name" value="Glu/Gln-tRNA-synth"/>
</dbReference>
<dbReference type="InterPro" id="IPR020058">
    <property type="entry name" value="Glu/Gln-tRNA-synth_Ib_cat-dom"/>
</dbReference>
<dbReference type="InterPro" id="IPR049940">
    <property type="entry name" value="GluQ/Sye"/>
</dbReference>
<dbReference type="InterPro" id="IPR033910">
    <property type="entry name" value="GluRS_core"/>
</dbReference>
<dbReference type="InterPro" id="IPR014729">
    <property type="entry name" value="Rossmann-like_a/b/a_fold"/>
</dbReference>
<dbReference type="NCBIfam" id="TIGR00464">
    <property type="entry name" value="gltX_bact"/>
    <property type="match status" value="1"/>
</dbReference>
<dbReference type="PANTHER" id="PTHR43311">
    <property type="entry name" value="GLUTAMATE--TRNA LIGASE"/>
    <property type="match status" value="1"/>
</dbReference>
<dbReference type="PANTHER" id="PTHR43311:SF2">
    <property type="entry name" value="GLUTAMATE--TRNA LIGASE, MITOCHONDRIAL-RELATED"/>
    <property type="match status" value="1"/>
</dbReference>
<dbReference type="Pfam" id="PF19269">
    <property type="entry name" value="Anticodon_2"/>
    <property type="match status" value="1"/>
</dbReference>
<dbReference type="Pfam" id="PF00749">
    <property type="entry name" value="tRNA-synt_1c"/>
    <property type="match status" value="1"/>
</dbReference>
<dbReference type="PRINTS" id="PR00987">
    <property type="entry name" value="TRNASYNTHGLU"/>
</dbReference>
<dbReference type="SUPFAM" id="SSF48163">
    <property type="entry name" value="An anticodon-binding domain of class I aminoacyl-tRNA synthetases"/>
    <property type="match status" value="1"/>
</dbReference>
<dbReference type="SUPFAM" id="SSF52374">
    <property type="entry name" value="Nucleotidylyl transferase"/>
    <property type="match status" value="1"/>
</dbReference>
<dbReference type="PROSITE" id="PS00178">
    <property type="entry name" value="AA_TRNA_LIGASE_I"/>
    <property type="match status" value="1"/>
</dbReference>
<protein>
    <recommendedName>
        <fullName evidence="1">Glutamate--tRNA ligase</fullName>
        <ecNumber evidence="1">6.1.1.17</ecNumber>
    </recommendedName>
    <alternativeName>
        <fullName evidence="1">Glutamyl-tRNA synthetase</fullName>
        <shortName evidence="1">GluRS</shortName>
    </alternativeName>
</protein>
<proteinExistence type="inferred from homology"/>
<name>SYE_NATTJ</name>